<feature type="signal peptide" evidence="2">
    <location>
        <begin position="1"/>
        <end position="19"/>
    </location>
</feature>
<feature type="chain" id="PRO_0000268641" description="Warthog protein 3">
    <location>
        <begin position="20"/>
        <end position="179"/>
    </location>
</feature>
<feature type="glycosylation site" description="N-linked (GlcNAc...) asparagine" evidence="2">
    <location>
        <position position="52"/>
    </location>
</feature>
<feature type="glycosylation site" description="N-linked (GlcNAc...) asparagine" evidence="2">
    <location>
        <position position="147"/>
    </location>
</feature>
<evidence type="ECO:0000250" key="1"/>
<evidence type="ECO:0000255" key="2"/>
<evidence type="ECO:0000269" key="3">
    <source>
    </source>
</evidence>
<evidence type="ECO:0000305" key="4"/>
<name>WRT3_CAEEL</name>
<reference key="1">
    <citation type="journal article" date="1998" name="Science">
        <title>Genome sequence of the nematode C. elegans: a platform for investigating biology.</title>
        <authorList>
            <consortium name="The C. elegans sequencing consortium"/>
        </authorList>
    </citation>
    <scope>NUCLEOTIDE SEQUENCE [LARGE SCALE GENOMIC DNA]</scope>
    <source>
        <strain>Bristol N2</strain>
    </source>
</reference>
<reference key="2">
    <citation type="journal article" date="1999" name="Genome Res.">
        <title>Caenorhabditis elegans has scores of hedgehog-related genes: sequence and expression analysis.</title>
        <authorList>
            <person name="Aspoeck G."/>
            <person name="Kagoshima H."/>
            <person name="Niklaus G."/>
            <person name="Buerglin T.R."/>
        </authorList>
    </citation>
    <scope>NUCLEOTIDE SEQUENCE [MRNA] OF 1-135</scope>
    <scope>NOMENCLATURE</scope>
    <scope>TISSUE SPECIFICITY</scope>
</reference>
<protein>
    <recommendedName>
        <fullName>Warthog protein 3</fullName>
    </recommendedName>
</protein>
<accession>Q20170</accession>
<accession>Q9XZF4</accession>
<comment type="function">
    <text evidence="1">Intercellular signal essential for a variety of patterning events during development.</text>
</comment>
<comment type="subcellular location">
    <subcellularLocation>
        <location evidence="4">Secreted</location>
    </subcellularLocation>
</comment>
<comment type="tissue specificity">
    <text evidence="3">Expressed in the trinucleate pharyngeal gland cell g1, seam cells and hypodermis.</text>
</comment>
<sequence length="179" mass="20966">MLYHVEMFTIILLFGFSLADYCGSDQVPYGMEVHHSGVVRLMCSKPNCYDKNYSDCPERAESRHGCQKSNQWVGGFEKNIEGDLYTMCCEFEGLEKYAKVRYSDVRIRRGEFFEGEEKENDDGDVVKFDVIKDIRMHKDDEGQAYYNLTVLSFNCESIPDVKPAWYQKSQWPYFQFAKN</sequence>
<dbReference type="EMBL" id="Z68342">
    <property type="protein sequence ID" value="CAA92775.2"/>
    <property type="molecule type" value="Genomic_DNA"/>
</dbReference>
<dbReference type="EMBL" id="AF139522">
    <property type="protein sequence ID" value="AAD33832.1"/>
    <property type="molecule type" value="mRNA"/>
</dbReference>
<dbReference type="PIR" id="T21969">
    <property type="entry name" value="T21969"/>
</dbReference>
<dbReference type="RefSeq" id="NP_001379102.1">
    <property type="nucleotide sequence ID" value="NM_001392370.1"/>
</dbReference>
<dbReference type="RefSeq" id="NP_501673.2">
    <property type="nucleotide sequence ID" value="NM_069272.3"/>
</dbReference>
<dbReference type="FunCoup" id="Q20170">
    <property type="interactions" value="127"/>
</dbReference>
<dbReference type="STRING" id="6239.F38E11.7a.1"/>
<dbReference type="GlyCosmos" id="Q20170">
    <property type="glycosylation" value="2 sites, No reported glycans"/>
</dbReference>
<dbReference type="PaxDb" id="6239-F38E11.7a"/>
<dbReference type="EnsemblMetazoa" id="F38E11.7a.1">
    <property type="protein sequence ID" value="F38E11.7a.1"/>
    <property type="gene ID" value="WBGene00006949"/>
</dbReference>
<dbReference type="GeneID" id="177781"/>
<dbReference type="UCSC" id="F38E11.7">
    <property type="organism name" value="c. elegans"/>
</dbReference>
<dbReference type="AGR" id="WB:WBGene00006949"/>
<dbReference type="WormBase" id="F38E11.7a">
    <property type="protein sequence ID" value="CE34013"/>
    <property type="gene ID" value="WBGene00006949"/>
    <property type="gene designation" value="wrt-3"/>
</dbReference>
<dbReference type="eggNOG" id="KOG3638">
    <property type="taxonomic scope" value="Eukaryota"/>
</dbReference>
<dbReference type="GeneTree" id="ENSGT00970000196402"/>
<dbReference type="InParanoid" id="Q20170"/>
<dbReference type="OMA" id="TMCCEFE"/>
<dbReference type="OrthoDB" id="5802408at2759"/>
<dbReference type="PhylomeDB" id="Q20170"/>
<dbReference type="PRO" id="PR:Q20170"/>
<dbReference type="Proteomes" id="UP000001940">
    <property type="component" value="Chromosome IV"/>
</dbReference>
<dbReference type="Bgee" id="WBGene00006949">
    <property type="expression patterns" value="Expressed in larva and 3 other cell types or tissues"/>
</dbReference>
<dbReference type="ExpressionAtlas" id="Q20170">
    <property type="expression patterns" value="differential"/>
</dbReference>
<dbReference type="GO" id="GO:0005576">
    <property type="term" value="C:extracellular region"/>
    <property type="evidence" value="ECO:0007669"/>
    <property type="project" value="UniProtKB-SubCell"/>
</dbReference>
<dbReference type="InterPro" id="IPR052140">
    <property type="entry name" value="Dev_Signal_Hedgehog-like"/>
</dbReference>
<dbReference type="PANTHER" id="PTHR46706">
    <property type="entry name" value="PROTEIN QUA-1-RELATED"/>
    <property type="match status" value="1"/>
</dbReference>
<dbReference type="PANTHER" id="PTHR46706:SF12">
    <property type="entry name" value="PROTEIN QUA-1-RELATED"/>
    <property type="match status" value="1"/>
</dbReference>
<gene>
    <name type="primary">wrt-3</name>
    <name type="ORF">F38E11.7</name>
</gene>
<keyword id="KW-0217">Developmental protein</keyword>
<keyword id="KW-0325">Glycoprotein</keyword>
<keyword id="KW-1185">Reference proteome</keyword>
<keyword id="KW-0964">Secreted</keyword>
<keyword id="KW-0732">Signal</keyword>
<proteinExistence type="evidence at transcript level"/>
<organism>
    <name type="scientific">Caenorhabditis elegans</name>
    <dbReference type="NCBI Taxonomy" id="6239"/>
    <lineage>
        <taxon>Eukaryota</taxon>
        <taxon>Metazoa</taxon>
        <taxon>Ecdysozoa</taxon>
        <taxon>Nematoda</taxon>
        <taxon>Chromadorea</taxon>
        <taxon>Rhabditida</taxon>
        <taxon>Rhabditina</taxon>
        <taxon>Rhabditomorpha</taxon>
        <taxon>Rhabditoidea</taxon>
        <taxon>Rhabditidae</taxon>
        <taxon>Peloderinae</taxon>
        <taxon>Caenorhabditis</taxon>
    </lineage>
</organism>